<organism>
    <name type="scientific">Rhodobacter capsulatus</name>
    <name type="common">Rhodopseudomonas capsulata</name>
    <dbReference type="NCBI Taxonomy" id="1061"/>
    <lineage>
        <taxon>Bacteria</taxon>
        <taxon>Pseudomonadati</taxon>
        <taxon>Pseudomonadota</taxon>
        <taxon>Alphaproteobacteria</taxon>
        <taxon>Rhodobacterales</taxon>
        <taxon>Rhodobacter group</taxon>
        <taxon>Rhodobacter</taxon>
    </lineage>
</organism>
<evidence type="ECO:0000256" key="1">
    <source>
        <dbReference type="SAM" id="MobiDB-lite"/>
    </source>
</evidence>
<protein>
    <recommendedName>
        <fullName>Uncharacterized 10.1 kDa protein in ndhA-ndhI intergenic region</fullName>
    </recommendedName>
</protein>
<dbReference type="EMBL" id="AF029365">
    <property type="protein sequence ID" value="AAC24998.1"/>
    <property type="molecule type" value="Genomic_DNA"/>
</dbReference>
<dbReference type="PIR" id="S22369">
    <property type="entry name" value="S22369"/>
</dbReference>
<accession>P42030</accession>
<name>YNDH_RHOCA</name>
<feature type="chain" id="PRO_0000066321" description="Uncharacterized 10.1 kDa protein in ndhA-ndhI intergenic region">
    <location>
        <begin position="1"/>
        <end position="93"/>
    </location>
</feature>
<feature type="region of interest" description="Disordered" evidence="1">
    <location>
        <begin position="73"/>
        <end position="93"/>
    </location>
</feature>
<feature type="compositionally biased region" description="Basic and acidic residues" evidence="1">
    <location>
        <begin position="83"/>
        <end position="93"/>
    </location>
</feature>
<reference key="1">
    <citation type="journal article" date="1992" name="FEBS Lett.">
        <title>Identification of two genes of Rhodobacter capsulatus coding for proteins homologous to the ND1 and 23 kDa subunits of the mitochondrial Complex I.</title>
        <authorList>
            <person name="Dupuis A."/>
        </authorList>
    </citation>
    <scope>NUCLEOTIDE SEQUENCE [GENOMIC DNA]</scope>
    <source>
        <strain>ATCC 33303 / B10</strain>
    </source>
</reference>
<proteinExistence type="predicted"/>
<sequence>MKDPNRPTLSVTLDGREVKLVPVIIEGYRLEVEGKNVTSFLSKTPPIMRAVGALEGRGDFGVGDLEVASDTRKWTVSGPVKQDTGKTDPAEKN</sequence>